<keyword id="KW-0067">ATP-binding</keyword>
<keyword id="KW-0238">DNA-binding</keyword>
<keyword id="KW-0413">Isomerase</keyword>
<keyword id="KW-0460">Magnesium</keyword>
<keyword id="KW-0479">Metal-binding</keyword>
<keyword id="KW-0547">Nucleotide-binding</keyword>
<keyword id="KW-1185">Reference proteome</keyword>
<keyword id="KW-0799">Topoisomerase</keyword>
<dbReference type="EC" id="5.6.2.2" evidence="1"/>
<dbReference type="EMBL" id="AY596297">
    <property type="protein sequence ID" value="AAV45488.1"/>
    <property type="molecule type" value="Genomic_DNA"/>
</dbReference>
<dbReference type="RefSeq" id="WP_004962323.1">
    <property type="nucleotide sequence ID" value="NZ_CP039138.1"/>
</dbReference>
<dbReference type="SMR" id="Q5V4R4"/>
<dbReference type="STRING" id="272569.rrnAC0459"/>
<dbReference type="PaxDb" id="272569-rrnAC0459"/>
<dbReference type="EnsemblBacteria" id="AAV45488">
    <property type="protein sequence ID" value="AAV45488"/>
    <property type="gene ID" value="rrnAC0459"/>
</dbReference>
<dbReference type="KEGG" id="hma:rrnAC0459"/>
<dbReference type="PATRIC" id="fig|272569.17.peg.1231"/>
<dbReference type="eggNOG" id="arCOG04143">
    <property type="taxonomic scope" value="Archaea"/>
</dbReference>
<dbReference type="HOGENOM" id="CLU_037229_1_0_2"/>
<dbReference type="Proteomes" id="UP000001169">
    <property type="component" value="Chromosome I"/>
</dbReference>
<dbReference type="GO" id="GO:0005694">
    <property type="term" value="C:chromosome"/>
    <property type="evidence" value="ECO:0007669"/>
    <property type="project" value="InterPro"/>
</dbReference>
<dbReference type="GO" id="GO:0005524">
    <property type="term" value="F:ATP binding"/>
    <property type="evidence" value="ECO:0007669"/>
    <property type="project" value="UniProtKB-KW"/>
</dbReference>
<dbReference type="GO" id="GO:0003677">
    <property type="term" value="F:DNA binding"/>
    <property type="evidence" value="ECO:0007669"/>
    <property type="project" value="UniProtKB-UniRule"/>
</dbReference>
<dbReference type="GO" id="GO:0003918">
    <property type="term" value="F:DNA topoisomerase type II (double strand cut, ATP-hydrolyzing) activity"/>
    <property type="evidence" value="ECO:0007669"/>
    <property type="project" value="UniProtKB-UniRule"/>
</dbReference>
<dbReference type="GO" id="GO:0000287">
    <property type="term" value="F:magnesium ion binding"/>
    <property type="evidence" value="ECO:0007669"/>
    <property type="project" value="UniProtKB-UniRule"/>
</dbReference>
<dbReference type="GO" id="GO:0006265">
    <property type="term" value="P:DNA topological change"/>
    <property type="evidence" value="ECO:0007669"/>
    <property type="project" value="UniProtKB-UniRule"/>
</dbReference>
<dbReference type="CDD" id="cd00223">
    <property type="entry name" value="TOPRIM_TopoIIB_SPO"/>
    <property type="match status" value="1"/>
</dbReference>
<dbReference type="FunFam" id="3.40.1360.10:FF:000011">
    <property type="entry name" value="Type 2 DNA topoisomerase 6 subunit A"/>
    <property type="match status" value="1"/>
</dbReference>
<dbReference type="Gene3D" id="3.40.1360.10">
    <property type="match status" value="1"/>
</dbReference>
<dbReference type="Gene3D" id="1.10.10.10">
    <property type="entry name" value="Winged helix-like DNA-binding domain superfamily/Winged helix DNA-binding domain"/>
    <property type="match status" value="1"/>
</dbReference>
<dbReference type="HAMAP" id="MF_00132">
    <property type="entry name" value="Top6A"/>
    <property type="match status" value="1"/>
</dbReference>
<dbReference type="InterPro" id="IPR002815">
    <property type="entry name" value="Spo11/TopoVI_A"/>
</dbReference>
<dbReference type="InterPro" id="IPR013049">
    <property type="entry name" value="Spo11/TopoVI_A_N"/>
</dbReference>
<dbReference type="InterPro" id="IPR036078">
    <property type="entry name" value="Spo11/TopoVI_A_sf"/>
</dbReference>
<dbReference type="InterPro" id="IPR049333">
    <property type="entry name" value="Topo_VI_alpha"/>
</dbReference>
<dbReference type="InterPro" id="IPR004085">
    <property type="entry name" value="TopoVI_A"/>
</dbReference>
<dbReference type="InterPro" id="IPR034136">
    <property type="entry name" value="TOPRIM_Topo6A/Spo11"/>
</dbReference>
<dbReference type="InterPro" id="IPR036388">
    <property type="entry name" value="WH-like_DNA-bd_sf"/>
</dbReference>
<dbReference type="NCBIfam" id="NF003332">
    <property type="entry name" value="PRK04342.1-1"/>
    <property type="match status" value="1"/>
</dbReference>
<dbReference type="PANTHER" id="PTHR10848">
    <property type="entry name" value="MEIOTIC RECOMBINATION PROTEIN SPO11"/>
    <property type="match status" value="1"/>
</dbReference>
<dbReference type="PANTHER" id="PTHR10848:SF0">
    <property type="entry name" value="MEIOTIC RECOMBINATION PROTEIN SPO11"/>
    <property type="match status" value="1"/>
</dbReference>
<dbReference type="Pfam" id="PF21180">
    <property type="entry name" value="TOP6A-Spo11_Toprim"/>
    <property type="match status" value="1"/>
</dbReference>
<dbReference type="Pfam" id="PF20768">
    <property type="entry name" value="Topo_VI_alpha"/>
    <property type="match status" value="1"/>
</dbReference>
<dbReference type="Pfam" id="PF04406">
    <property type="entry name" value="TP6A_N"/>
    <property type="match status" value="1"/>
</dbReference>
<dbReference type="PRINTS" id="PR01550">
    <property type="entry name" value="TOP6AFAMILY"/>
</dbReference>
<dbReference type="PRINTS" id="PR01552">
    <property type="entry name" value="TPISMRASE6A"/>
</dbReference>
<dbReference type="SUPFAM" id="SSF56726">
    <property type="entry name" value="DNA topoisomerase IV, alpha subunit"/>
    <property type="match status" value="1"/>
</dbReference>
<dbReference type="PROSITE" id="PS52041">
    <property type="entry name" value="TOPO_IIB"/>
    <property type="match status" value="1"/>
</dbReference>
<feature type="chain" id="PRO_0000145446" description="Type 2 DNA topoisomerase 6 subunit A">
    <location>
        <begin position="1"/>
        <end position="368"/>
    </location>
</feature>
<feature type="domain" description="Topo IIA-type catalytic" evidence="2">
    <location>
        <begin position="9"/>
        <end position="148"/>
    </location>
</feature>
<feature type="active site" description="O-(5'-phospho-DNA)-tyrosine intermediate" evidence="2">
    <location>
        <position position="103"/>
    </location>
</feature>
<feature type="binding site" evidence="1">
    <location>
        <position position="201"/>
    </location>
    <ligand>
        <name>Mg(2+)</name>
        <dbReference type="ChEBI" id="CHEBI:18420"/>
    </ligand>
</feature>
<feature type="binding site" evidence="1">
    <location>
        <position position="253"/>
    </location>
    <ligand>
        <name>Mg(2+)</name>
        <dbReference type="ChEBI" id="CHEBI:18420"/>
    </ligand>
</feature>
<proteinExistence type="inferred from homology"/>
<gene>
    <name evidence="1" type="primary">top6A</name>
    <name type="ordered locus">rrnAC0459</name>
</gene>
<accession>Q5V4R4</accession>
<sequence length="368" mass="41965">MSTDSDTTPDTEEAREQLIDLAADFYDQFADGEVPTMTIPTRTKSNIVFDEDEQVWVYGDRNSTRSAKTISGAEKILKAVYTIDFLSQQLEEDRSSTLRELYYLSESWDLDEAQFNTQDESNNLIEDLEIVSDVKREDFHMRPEESGAKVMGPLLLREQTNRGDREIHCQDDVGQGGYQIPNNPDTIEFLDNDAKFVLCVETGGMRDRLVENGFDDEYDALVVHLGGQPARATRRLIKRLHDELDLPVTVFTDGDPWSYRIFGSVSYGSIKSAHLSEYLATPEAQFIGIRPEDIVEYELPTDPLSDSDVNALESELEDPRFQTDFWEEQIELQLDINKKAEQQALASRGLDFVTETYLPERLDEMGIL</sequence>
<reference key="1">
    <citation type="journal article" date="2004" name="Genome Res.">
        <title>Genome sequence of Haloarcula marismortui: a halophilic archaeon from the Dead Sea.</title>
        <authorList>
            <person name="Baliga N.S."/>
            <person name="Bonneau R."/>
            <person name="Facciotti M.T."/>
            <person name="Pan M."/>
            <person name="Glusman G."/>
            <person name="Deutsch E.W."/>
            <person name="Shannon P."/>
            <person name="Chiu Y."/>
            <person name="Weng R.S."/>
            <person name="Gan R.R."/>
            <person name="Hung P."/>
            <person name="Date S.V."/>
            <person name="Marcotte E."/>
            <person name="Hood L."/>
            <person name="Ng W.V."/>
        </authorList>
    </citation>
    <scope>NUCLEOTIDE SEQUENCE [LARGE SCALE GENOMIC DNA]</scope>
    <source>
        <strain>ATCC 43049 / DSM 3752 / JCM 8966 / VKM B-1809</strain>
    </source>
</reference>
<name>TOP6A_HALMA</name>
<organism>
    <name type="scientific">Haloarcula marismortui (strain ATCC 43049 / DSM 3752 / JCM 8966 / VKM B-1809)</name>
    <name type="common">Halobacterium marismortui</name>
    <dbReference type="NCBI Taxonomy" id="272569"/>
    <lineage>
        <taxon>Archaea</taxon>
        <taxon>Methanobacteriati</taxon>
        <taxon>Methanobacteriota</taxon>
        <taxon>Stenosarchaea group</taxon>
        <taxon>Halobacteria</taxon>
        <taxon>Halobacteriales</taxon>
        <taxon>Haloarculaceae</taxon>
        <taxon>Haloarcula</taxon>
    </lineage>
</organism>
<protein>
    <recommendedName>
        <fullName evidence="1">Type 2 DNA topoisomerase 6 subunit A</fullName>
        <ecNumber evidence="1">5.6.2.2</ecNumber>
    </recommendedName>
    <alternativeName>
        <fullName evidence="1">Type II DNA topoisomerase VI subunit A</fullName>
    </alternativeName>
</protein>
<comment type="function">
    <text evidence="1">Relaxes both positive and negative superturns and exhibits a strong decatenase activity.</text>
</comment>
<comment type="catalytic activity">
    <reaction evidence="1">
        <text>ATP-dependent breakage, passage and rejoining of double-stranded DNA.</text>
        <dbReference type="EC" id="5.6.2.2"/>
    </reaction>
</comment>
<comment type="cofactor">
    <cofactor evidence="1">
        <name>Mg(2+)</name>
        <dbReference type="ChEBI" id="CHEBI:18420"/>
    </cofactor>
</comment>
<comment type="subunit">
    <text evidence="1">Homodimer. Heterotetramer of two Top6A and two Top6B chains.</text>
</comment>
<comment type="similarity">
    <text evidence="1">Belongs to the TOP6A family.</text>
</comment>
<evidence type="ECO:0000255" key="1">
    <source>
        <dbReference type="HAMAP-Rule" id="MF_00132"/>
    </source>
</evidence>
<evidence type="ECO:0000255" key="2">
    <source>
        <dbReference type="PROSITE-ProRule" id="PRU01385"/>
    </source>
</evidence>